<comment type="function">
    <text evidence="1">One of the primary rRNA binding proteins, it binds directly to 16S rRNA central domain where it helps coordinate assembly of the platform of the 30S subunit.</text>
</comment>
<comment type="subunit">
    <text evidence="1">Part of the 30S ribosomal subunit. Contacts proteins S5 and S12.</text>
</comment>
<comment type="similarity">
    <text evidence="1">Belongs to the universal ribosomal protein uS8 family.</text>
</comment>
<evidence type="ECO:0000255" key="1">
    <source>
        <dbReference type="HAMAP-Rule" id="MF_01302"/>
    </source>
</evidence>
<evidence type="ECO:0000305" key="2"/>
<organism>
    <name type="scientific">Marinobacter nauticus (strain ATCC 700491 / DSM 11845 / VT8)</name>
    <name type="common">Marinobacter aquaeolei</name>
    <dbReference type="NCBI Taxonomy" id="351348"/>
    <lineage>
        <taxon>Bacteria</taxon>
        <taxon>Pseudomonadati</taxon>
        <taxon>Pseudomonadota</taxon>
        <taxon>Gammaproteobacteria</taxon>
        <taxon>Pseudomonadales</taxon>
        <taxon>Marinobacteraceae</taxon>
        <taxon>Marinobacter</taxon>
    </lineage>
</organism>
<sequence>MSMQDTLADMFTRIRNAQMASKADVTMPSSKMKVSVAQVLKDEGYVADFSVSADAKPELTITLKYFGGKPVIEEIQRVSRPSLRQYKGAGELPKVAGGLGVAIVSTSRGVMTDRAARAAGVGGEVICTVF</sequence>
<feature type="chain" id="PRO_0000290873" description="Small ribosomal subunit protein uS8">
    <location>
        <begin position="1"/>
        <end position="130"/>
    </location>
</feature>
<gene>
    <name evidence="1" type="primary">rpsH</name>
    <name type="ordered locus">Maqu_0733</name>
</gene>
<name>RS8_MARN8</name>
<accession>A1TYL1</accession>
<dbReference type="EMBL" id="CP000514">
    <property type="protein sequence ID" value="ABM17830.1"/>
    <property type="molecule type" value="Genomic_DNA"/>
</dbReference>
<dbReference type="RefSeq" id="WP_011784256.1">
    <property type="nucleotide sequence ID" value="NC_008740.1"/>
</dbReference>
<dbReference type="SMR" id="A1TYL1"/>
<dbReference type="STRING" id="351348.Maqu_0733"/>
<dbReference type="GeneID" id="31820108"/>
<dbReference type="KEGG" id="maq:Maqu_0733"/>
<dbReference type="eggNOG" id="COG0096">
    <property type="taxonomic scope" value="Bacteria"/>
</dbReference>
<dbReference type="HOGENOM" id="CLU_098428_0_0_6"/>
<dbReference type="OrthoDB" id="9802617at2"/>
<dbReference type="Proteomes" id="UP000000998">
    <property type="component" value="Chromosome"/>
</dbReference>
<dbReference type="GO" id="GO:1990904">
    <property type="term" value="C:ribonucleoprotein complex"/>
    <property type="evidence" value="ECO:0007669"/>
    <property type="project" value="UniProtKB-KW"/>
</dbReference>
<dbReference type="GO" id="GO:0005840">
    <property type="term" value="C:ribosome"/>
    <property type="evidence" value="ECO:0007669"/>
    <property type="project" value="UniProtKB-KW"/>
</dbReference>
<dbReference type="GO" id="GO:0019843">
    <property type="term" value="F:rRNA binding"/>
    <property type="evidence" value="ECO:0007669"/>
    <property type="project" value="UniProtKB-UniRule"/>
</dbReference>
<dbReference type="GO" id="GO:0003735">
    <property type="term" value="F:structural constituent of ribosome"/>
    <property type="evidence" value="ECO:0007669"/>
    <property type="project" value="InterPro"/>
</dbReference>
<dbReference type="GO" id="GO:0006412">
    <property type="term" value="P:translation"/>
    <property type="evidence" value="ECO:0007669"/>
    <property type="project" value="UniProtKB-UniRule"/>
</dbReference>
<dbReference type="FunFam" id="3.30.1370.30:FF:000002">
    <property type="entry name" value="30S ribosomal protein S8"/>
    <property type="match status" value="1"/>
</dbReference>
<dbReference type="FunFam" id="3.30.1490.10:FF:000001">
    <property type="entry name" value="30S ribosomal protein S8"/>
    <property type="match status" value="1"/>
</dbReference>
<dbReference type="Gene3D" id="3.30.1370.30">
    <property type="match status" value="1"/>
</dbReference>
<dbReference type="Gene3D" id="3.30.1490.10">
    <property type="match status" value="1"/>
</dbReference>
<dbReference type="HAMAP" id="MF_01302_B">
    <property type="entry name" value="Ribosomal_uS8_B"/>
    <property type="match status" value="1"/>
</dbReference>
<dbReference type="InterPro" id="IPR000630">
    <property type="entry name" value="Ribosomal_uS8"/>
</dbReference>
<dbReference type="InterPro" id="IPR047863">
    <property type="entry name" value="Ribosomal_uS8_CS"/>
</dbReference>
<dbReference type="InterPro" id="IPR035987">
    <property type="entry name" value="Ribosomal_uS8_sf"/>
</dbReference>
<dbReference type="NCBIfam" id="NF001109">
    <property type="entry name" value="PRK00136.1"/>
    <property type="match status" value="1"/>
</dbReference>
<dbReference type="PANTHER" id="PTHR11758">
    <property type="entry name" value="40S RIBOSOMAL PROTEIN S15A"/>
    <property type="match status" value="1"/>
</dbReference>
<dbReference type="Pfam" id="PF00410">
    <property type="entry name" value="Ribosomal_S8"/>
    <property type="match status" value="1"/>
</dbReference>
<dbReference type="SUPFAM" id="SSF56047">
    <property type="entry name" value="Ribosomal protein S8"/>
    <property type="match status" value="1"/>
</dbReference>
<dbReference type="PROSITE" id="PS00053">
    <property type="entry name" value="RIBOSOMAL_S8"/>
    <property type="match status" value="1"/>
</dbReference>
<keyword id="KW-0687">Ribonucleoprotein</keyword>
<keyword id="KW-0689">Ribosomal protein</keyword>
<keyword id="KW-0694">RNA-binding</keyword>
<keyword id="KW-0699">rRNA-binding</keyword>
<protein>
    <recommendedName>
        <fullName evidence="1">Small ribosomal subunit protein uS8</fullName>
    </recommendedName>
    <alternativeName>
        <fullName evidence="2">30S ribosomal protein S8</fullName>
    </alternativeName>
</protein>
<reference key="1">
    <citation type="journal article" date="2011" name="Appl. Environ. Microbiol.">
        <title>Genomic potential of Marinobacter aquaeolei, a biogeochemical 'opportunitroph'.</title>
        <authorList>
            <person name="Singer E."/>
            <person name="Webb E.A."/>
            <person name="Nelson W.C."/>
            <person name="Heidelberg J.F."/>
            <person name="Ivanova N."/>
            <person name="Pati A."/>
            <person name="Edwards K.J."/>
        </authorList>
    </citation>
    <scope>NUCLEOTIDE SEQUENCE [LARGE SCALE GENOMIC DNA]</scope>
    <source>
        <strain>ATCC 700491 / DSM 11845 / VT8</strain>
    </source>
</reference>
<proteinExistence type="inferred from homology"/>